<name>LSRC_YERPN</name>
<keyword id="KW-0997">Cell inner membrane</keyword>
<keyword id="KW-1003">Cell membrane</keyword>
<keyword id="KW-0472">Membrane</keyword>
<keyword id="KW-0812">Transmembrane</keyword>
<keyword id="KW-1133">Transmembrane helix</keyword>
<keyword id="KW-0813">Transport</keyword>
<dbReference type="EMBL" id="CP000305">
    <property type="protein sequence ID" value="ABG16614.1"/>
    <property type="molecule type" value="Genomic_DNA"/>
</dbReference>
<dbReference type="EMBL" id="ACNQ01000006">
    <property type="protein sequence ID" value="EEO78063.1"/>
    <property type="molecule type" value="Genomic_DNA"/>
</dbReference>
<dbReference type="RefSeq" id="WP_002209191.1">
    <property type="nucleotide sequence ID" value="NZ_ACNQ01000006.1"/>
</dbReference>
<dbReference type="GeneID" id="57974199"/>
<dbReference type="KEGG" id="ypn:YPN_0281"/>
<dbReference type="HOGENOM" id="CLU_028880_0_1_6"/>
<dbReference type="Proteomes" id="UP000008936">
    <property type="component" value="Chromosome"/>
</dbReference>
<dbReference type="GO" id="GO:0005886">
    <property type="term" value="C:plasma membrane"/>
    <property type="evidence" value="ECO:0007669"/>
    <property type="project" value="UniProtKB-SubCell"/>
</dbReference>
<dbReference type="GO" id="GO:0022857">
    <property type="term" value="F:transmembrane transporter activity"/>
    <property type="evidence" value="ECO:0007669"/>
    <property type="project" value="InterPro"/>
</dbReference>
<dbReference type="CDD" id="cd06579">
    <property type="entry name" value="TM_PBP1_transp_AraH_like"/>
    <property type="match status" value="1"/>
</dbReference>
<dbReference type="InterPro" id="IPR001851">
    <property type="entry name" value="ABC_transp_permease"/>
</dbReference>
<dbReference type="NCBIfam" id="NF011961">
    <property type="entry name" value="PRK15432.1"/>
    <property type="match status" value="1"/>
</dbReference>
<dbReference type="PANTHER" id="PTHR32196">
    <property type="entry name" value="ABC TRANSPORTER PERMEASE PROTEIN YPHD-RELATED-RELATED"/>
    <property type="match status" value="1"/>
</dbReference>
<dbReference type="PANTHER" id="PTHR32196:SF29">
    <property type="entry name" value="AUTOINDUCER 2 IMPORT SYSTEM PERMEASE PROTEIN LSRC"/>
    <property type="match status" value="1"/>
</dbReference>
<dbReference type="Pfam" id="PF02653">
    <property type="entry name" value="BPD_transp_2"/>
    <property type="match status" value="1"/>
</dbReference>
<proteinExistence type="inferred from homology"/>
<sequence>MLKFIQNNREGTALLAILTLFALLGIIDRNYFSLQTFTMIFSSAQILILLAIGATLVMLTRNIDVSVGSITGLCAVTVGMALNAGFGLAASCLFALLVGMVAGFFNGILVTWLRIPAIVATLGTLGLYRGLMLLLTGGKWIEGLPADLKSLSTPILFSISPIGWLTMLLILAMAWLLGKTAFGRSFYATGDNLQGARQLGVRTDSLRIFAFSMNGVMAALAGIVFASQIGFIPNQTGNGLEMKAIAACVLGGISLLGGTGTIIGAILGAFLLTQIDSVLVLLRLPAWWNDFIAGLVLLGVLVFDGRLRCAVERNIRQQKYARFTAQAIISDKKPTVSDNNPAASNKKKAAL</sequence>
<comment type="function">
    <text evidence="1">Part of the ABC transporter complex LsrABCD involved in autoinducer 2 (AI-2) import. Probably responsible for the translocation of the substrate across the membrane (By similarity).</text>
</comment>
<comment type="subunit">
    <text evidence="1">The complex is composed of two ATP-binding proteins (LsrA), two transmembrane proteins (LsrC and LsrD) and a solute-binding protein (LsrB).</text>
</comment>
<comment type="subcellular location">
    <subcellularLocation>
        <location evidence="1">Cell inner membrane</location>
        <topology evidence="1">Multi-pass membrane protein</topology>
    </subcellularLocation>
</comment>
<comment type="similarity">
    <text evidence="3">Belongs to the binding-protein-dependent transport system permease family. AraH/RbsC subfamily.</text>
</comment>
<reference key="1">
    <citation type="journal article" date="2006" name="J. Bacteriol.">
        <title>Complete genome sequence of Yersinia pestis strains Antiqua and Nepal516: evidence of gene reduction in an emerging pathogen.</title>
        <authorList>
            <person name="Chain P.S.G."/>
            <person name="Hu P."/>
            <person name="Malfatti S.A."/>
            <person name="Radnedge L."/>
            <person name="Larimer F."/>
            <person name="Vergez L.M."/>
            <person name="Worsham P."/>
            <person name="Chu M.C."/>
            <person name="Andersen G.L."/>
        </authorList>
    </citation>
    <scope>NUCLEOTIDE SEQUENCE [LARGE SCALE GENOMIC DNA]</scope>
    <source>
        <strain>Nepal516</strain>
    </source>
</reference>
<reference key="2">
    <citation type="submission" date="2009-04" db="EMBL/GenBank/DDBJ databases">
        <title>Yersinia pestis Nepal516A whole genome shotgun sequencing project.</title>
        <authorList>
            <person name="Plunkett G. III"/>
            <person name="Anderson B.D."/>
            <person name="Baumler D.J."/>
            <person name="Burland V."/>
            <person name="Cabot E.L."/>
            <person name="Glasner J.D."/>
            <person name="Mau B."/>
            <person name="Neeno-Eckwall E."/>
            <person name="Perna N.T."/>
            <person name="Munk A.C."/>
            <person name="Tapia R."/>
            <person name="Green L.D."/>
            <person name="Rogers Y.C."/>
            <person name="Detter J.C."/>
            <person name="Bruce D.C."/>
            <person name="Brettin T.S."/>
        </authorList>
    </citation>
    <scope>NUCLEOTIDE SEQUENCE [LARGE SCALE GENOMIC DNA]</scope>
    <source>
        <strain>Nepal516</strain>
    </source>
</reference>
<evidence type="ECO:0000250" key="1"/>
<evidence type="ECO:0000255" key="2"/>
<evidence type="ECO:0000305" key="3"/>
<organism>
    <name type="scientific">Yersinia pestis bv. Antiqua (strain Nepal516)</name>
    <dbReference type="NCBI Taxonomy" id="377628"/>
    <lineage>
        <taxon>Bacteria</taxon>
        <taxon>Pseudomonadati</taxon>
        <taxon>Pseudomonadota</taxon>
        <taxon>Gammaproteobacteria</taxon>
        <taxon>Enterobacterales</taxon>
        <taxon>Yersiniaceae</taxon>
        <taxon>Yersinia</taxon>
    </lineage>
</organism>
<gene>
    <name type="primary">lsrC</name>
    <name type="ordered locus">YPN_0281</name>
    <name type="ORF">YP516_0278</name>
</gene>
<feature type="chain" id="PRO_0000351358" description="Autoinducer 2 import system permease protein LsrC">
    <location>
        <begin position="1"/>
        <end position="351"/>
    </location>
</feature>
<feature type="transmembrane region" description="Helical" evidence="2">
    <location>
        <begin position="14"/>
        <end position="34"/>
    </location>
</feature>
<feature type="transmembrane region" description="Helical" evidence="2">
    <location>
        <begin position="39"/>
        <end position="59"/>
    </location>
</feature>
<feature type="transmembrane region" description="Helical" evidence="2">
    <location>
        <begin position="70"/>
        <end position="90"/>
    </location>
</feature>
<feature type="transmembrane region" description="Helical" evidence="2">
    <location>
        <begin position="93"/>
        <end position="113"/>
    </location>
</feature>
<feature type="transmembrane region" description="Helical" evidence="2">
    <location>
        <begin position="115"/>
        <end position="135"/>
    </location>
</feature>
<feature type="transmembrane region" description="Helical" evidence="2">
    <location>
        <begin position="155"/>
        <end position="175"/>
    </location>
</feature>
<feature type="transmembrane region" description="Helical" evidence="2">
    <location>
        <begin position="213"/>
        <end position="233"/>
    </location>
</feature>
<feature type="transmembrane region" description="Helical" evidence="2">
    <location>
        <begin position="252"/>
        <end position="272"/>
    </location>
</feature>
<feature type="transmembrane region" description="Helical" evidence="2">
    <location>
        <begin position="284"/>
        <end position="304"/>
    </location>
</feature>
<protein>
    <recommendedName>
        <fullName>Autoinducer 2 import system permease protein LsrC</fullName>
        <shortName>AI-2 import system permease protein LsrC</shortName>
    </recommendedName>
</protein>
<accession>Q1CN16</accession>
<accession>C4GNI1</accession>